<protein>
    <recommendedName>
        <fullName>Probable calcium-binding protein CML25/26</fullName>
    </recommendedName>
    <alternativeName>
        <fullName>Calmodulin-like protein 25/26</fullName>
    </alternativeName>
</protein>
<accession>Q2QYW1</accession>
<accession>A0A0N7KTF6</accession>
<proteinExistence type="inferred from homology"/>
<organism>
    <name type="scientific">Oryza sativa subsp. japonica</name>
    <name type="common">Rice</name>
    <dbReference type="NCBI Taxonomy" id="39947"/>
    <lineage>
        <taxon>Eukaryota</taxon>
        <taxon>Viridiplantae</taxon>
        <taxon>Streptophyta</taxon>
        <taxon>Embryophyta</taxon>
        <taxon>Tracheophyta</taxon>
        <taxon>Spermatophyta</taxon>
        <taxon>Magnoliopsida</taxon>
        <taxon>Liliopsida</taxon>
        <taxon>Poales</taxon>
        <taxon>Poaceae</taxon>
        <taxon>BOP clade</taxon>
        <taxon>Oryzoideae</taxon>
        <taxon>Oryzeae</taxon>
        <taxon>Oryzinae</taxon>
        <taxon>Oryza</taxon>
        <taxon>Oryza sativa</taxon>
    </lineage>
</organism>
<sequence>MASSASSVFAAFDKDGDGKVSASELRGCMAAALGEEVSEEEAAAILATADTDGDGLLDHHEFMRLSAAHQLQEPAEESLRCLREAFDMYAEEEETAVITPASLRRMLRRLGSEHQRLEMEECRAMICRFDLNGDGVLSFDEFRVMMLMA</sequence>
<name>CML25_ORYSJ</name>
<comment type="function">
    <text evidence="1">Potential calcium sensor.</text>
</comment>
<comment type="caution">
    <text evidence="3">Although assigned as a calmodulin family member by PubMed:17263873, it only contains EF-hand domains.</text>
</comment>
<gene>
    <name type="primary">CML25</name>
    <name evidence="4" type="ordered locus">Os11g0105000</name>
    <name evidence="3" type="ordered locus">LOC_Os11g01390</name>
    <name type="ORF">OsJ_033568</name>
</gene>
<gene>
    <name type="primary">CML26</name>
    <name evidence="5" type="ordered locus">Os12g0104900</name>
    <name evidence="3" type="ordered locus">LOC_Os12g01400</name>
    <name type="ORF">OsJ_033577</name>
</gene>
<reference key="1">
    <citation type="journal article" date="2005" name="BMC Biol.">
        <title>The sequence of rice chromosomes 11 and 12, rich in disease resistance genes and recent gene duplications.</title>
        <authorList>
            <consortium name="The rice chromosomes 11 and 12 sequencing consortia"/>
        </authorList>
    </citation>
    <scope>NUCLEOTIDE SEQUENCE [LARGE SCALE GENOMIC DNA] (CML25 AND CML26)</scope>
    <source>
        <strain>cv. Nipponbare</strain>
    </source>
</reference>
<reference key="2">
    <citation type="journal article" date="2005" name="Nature">
        <title>The map-based sequence of the rice genome.</title>
        <authorList>
            <consortium name="International rice genome sequencing project (IRGSP)"/>
        </authorList>
    </citation>
    <scope>NUCLEOTIDE SEQUENCE [LARGE SCALE GENOMIC DNA] (CML25 AND CML26)</scope>
    <source>
        <strain>cv. Nipponbare</strain>
    </source>
</reference>
<reference key="3">
    <citation type="journal article" date="2008" name="Nucleic Acids Res.">
        <title>The rice annotation project database (RAP-DB): 2008 update.</title>
        <authorList>
            <consortium name="The rice annotation project (RAP)"/>
        </authorList>
    </citation>
    <scope>GENOME REANNOTATION</scope>
    <source>
        <strain>cv. Nipponbare</strain>
    </source>
</reference>
<reference key="4">
    <citation type="journal article" date="2013" name="Rice">
        <title>Improvement of the Oryza sativa Nipponbare reference genome using next generation sequence and optical map data.</title>
        <authorList>
            <person name="Kawahara Y."/>
            <person name="de la Bastide M."/>
            <person name="Hamilton J.P."/>
            <person name="Kanamori H."/>
            <person name="McCombie W.R."/>
            <person name="Ouyang S."/>
            <person name="Schwartz D.C."/>
            <person name="Tanaka T."/>
            <person name="Wu J."/>
            <person name="Zhou S."/>
            <person name="Childs K.L."/>
            <person name="Davidson R.M."/>
            <person name="Lin H."/>
            <person name="Quesada-Ocampo L."/>
            <person name="Vaillancourt B."/>
            <person name="Sakai H."/>
            <person name="Lee S.S."/>
            <person name="Kim J."/>
            <person name="Numa H."/>
            <person name="Itoh T."/>
            <person name="Buell C.R."/>
            <person name="Matsumoto T."/>
        </authorList>
    </citation>
    <scope>GENOME REANNOTATION</scope>
    <source>
        <strain>cv. Nipponbare</strain>
    </source>
</reference>
<reference key="5">
    <citation type="journal article" date="2005" name="PLoS Biol.">
        <title>The genomes of Oryza sativa: a history of duplications.</title>
        <authorList>
            <person name="Yu J."/>
            <person name="Wang J."/>
            <person name="Lin W."/>
            <person name="Li S."/>
            <person name="Li H."/>
            <person name="Zhou J."/>
            <person name="Ni P."/>
            <person name="Dong W."/>
            <person name="Hu S."/>
            <person name="Zeng C."/>
            <person name="Zhang J."/>
            <person name="Zhang Y."/>
            <person name="Li R."/>
            <person name="Xu Z."/>
            <person name="Li S."/>
            <person name="Li X."/>
            <person name="Zheng H."/>
            <person name="Cong L."/>
            <person name="Lin L."/>
            <person name="Yin J."/>
            <person name="Geng J."/>
            <person name="Li G."/>
            <person name="Shi J."/>
            <person name="Liu J."/>
            <person name="Lv H."/>
            <person name="Li J."/>
            <person name="Wang J."/>
            <person name="Deng Y."/>
            <person name="Ran L."/>
            <person name="Shi X."/>
            <person name="Wang X."/>
            <person name="Wu Q."/>
            <person name="Li C."/>
            <person name="Ren X."/>
            <person name="Wang J."/>
            <person name="Wang X."/>
            <person name="Li D."/>
            <person name="Liu D."/>
            <person name="Zhang X."/>
            <person name="Ji Z."/>
            <person name="Zhao W."/>
            <person name="Sun Y."/>
            <person name="Zhang Z."/>
            <person name="Bao J."/>
            <person name="Han Y."/>
            <person name="Dong L."/>
            <person name="Ji J."/>
            <person name="Chen P."/>
            <person name="Wu S."/>
            <person name="Liu J."/>
            <person name="Xiao Y."/>
            <person name="Bu D."/>
            <person name="Tan J."/>
            <person name="Yang L."/>
            <person name="Ye C."/>
            <person name="Zhang J."/>
            <person name="Xu J."/>
            <person name="Zhou Y."/>
            <person name="Yu Y."/>
            <person name="Zhang B."/>
            <person name="Zhuang S."/>
            <person name="Wei H."/>
            <person name="Liu B."/>
            <person name="Lei M."/>
            <person name="Yu H."/>
            <person name="Li Y."/>
            <person name="Xu H."/>
            <person name="Wei S."/>
            <person name="He X."/>
            <person name="Fang L."/>
            <person name="Zhang Z."/>
            <person name="Zhang Y."/>
            <person name="Huang X."/>
            <person name="Su Z."/>
            <person name="Tong W."/>
            <person name="Li J."/>
            <person name="Tong Z."/>
            <person name="Li S."/>
            <person name="Ye J."/>
            <person name="Wang L."/>
            <person name="Fang L."/>
            <person name="Lei T."/>
            <person name="Chen C.-S."/>
            <person name="Chen H.-C."/>
            <person name="Xu Z."/>
            <person name="Li H."/>
            <person name="Huang H."/>
            <person name="Zhang F."/>
            <person name="Xu H."/>
            <person name="Li N."/>
            <person name="Zhao C."/>
            <person name="Li S."/>
            <person name="Dong L."/>
            <person name="Huang Y."/>
            <person name="Li L."/>
            <person name="Xi Y."/>
            <person name="Qi Q."/>
            <person name="Li W."/>
            <person name="Zhang B."/>
            <person name="Hu W."/>
            <person name="Zhang Y."/>
            <person name="Tian X."/>
            <person name="Jiao Y."/>
            <person name="Liang X."/>
            <person name="Jin J."/>
            <person name="Gao L."/>
            <person name="Zheng W."/>
            <person name="Hao B."/>
            <person name="Liu S.-M."/>
            <person name="Wang W."/>
            <person name="Yuan L."/>
            <person name="Cao M."/>
            <person name="McDermott J."/>
            <person name="Samudrala R."/>
            <person name="Wang J."/>
            <person name="Wong G.K.-S."/>
            <person name="Yang H."/>
        </authorList>
    </citation>
    <scope>NUCLEOTIDE SEQUENCE [LARGE SCALE GENOMIC DNA] (CML26)</scope>
    <source>
        <strain>cv. Nipponbare</strain>
    </source>
</reference>
<reference key="6">
    <citation type="journal article" date="2007" name="BMC Plant Biol.">
        <title>Genome-wide identification and analyses of the rice calmodulin and related potential calcium sensor proteins.</title>
        <authorList>
            <person name="Boonburapong B."/>
            <person name="Buaboocha T."/>
        </authorList>
    </citation>
    <scope>GENE FAMILY</scope>
    <scope>NOMENCLATURE</scope>
</reference>
<dbReference type="EMBL" id="DP000010">
    <property type="protein sequence ID" value="ABA91062.1"/>
    <property type="molecule type" value="Genomic_DNA"/>
</dbReference>
<dbReference type="EMBL" id="DP000011">
    <property type="protein sequence ID" value="ABA95599.1"/>
    <property type="molecule type" value="Genomic_DNA"/>
</dbReference>
<dbReference type="EMBL" id="AP008217">
    <property type="protein sequence ID" value="BAF27376.1"/>
    <property type="molecule type" value="Genomic_DNA"/>
</dbReference>
<dbReference type="EMBL" id="AP008218">
    <property type="protein sequence ID" value="BAF28948.1"/>
    <property type="molecule type" value="Genomic_DNA"/>
</dbReference>
<dbReference type="EMBL" id="AP014967">
    <property type="protein sequence ID" value="BAT12303.1"/>
    <property type="molecule type" value="Genomic_DNA"/>
</dbReference>
<dbReference type="EMBL" id="AP014968">
    <property type="protein sequence ID" value="BAT15482.1"/>
    <property type="molecule type" value="Genomic_DNA"/>
</dbReference>
<dbReference type="EMBL" id="CM000149">
    <property type="protein sequence ID" value="EAZ19359.1"/>
    <property type="molecule type" value="Genomic_DNA"/>
</dbReference>
<dbReference type="EMBL" id="CM000149">
    <property type="protein sequence ID" value="EAZ19368.1"/>
    <property type="molecule type" value="Genomic_DNA"/>
</dbReference>
<dbReference type="SMR" id="Q2QYW1"/>
<dbReference type="FunCoup" id="Q2QYW1">
    <property type="interactions" value="155"/>
</dbReference>
<dbReference type="STRING" id="39947.Q2QYW1"/>
<dbReference type="PaxDb" id="39947-Q2QYW1"/>
<dbReference type="EnsemblPlants" id="Os11t0105000-00">
    <property type="protein sequence ID" value="Os11t0105000-00"/>
    <property type="gene ID" value="Os11g0105000"/>
</dbReference>
<dbReference type="EnsemblPlants" id="Os12t0104900-00">
    <property type="protein sequence ID" value="Os12t0104900-00"/>
    <property type="gene ID" value="Os12g0104900"/>
</dbReference>
<dbReference type="Gramene" id="Os11t0105000-00">
    <property type="protein sequence ID" value="Os11t0105000-00"/>
    <property type="gene ID" value="Os11g0105000"/>
</dbReference>
<dbReference type="Gramene" id="Os12t0104900-00">
    <property type="protein sequence ID" value="Os12t0104900-00"/>
    <property type="gene ID" value="Os12g0104900"/>
</dbReference>
<dbReference type="KEGG" id="dosa:Os11g0105000"/>
<dbReference type="KEGG" id="dosa:Os12g0104900"/>
<dbReference type="KEGG" id="osa:4349547"/>
<dbReference type="KEGG" id="osa:4351256"/>
<dbReference type="eggNOG" id="KOG0027">
    <property type="taxonomic scope" value="Eukaryota"/>
</dbReference>
<dbReference type="HOGENOM" id="CLU_061288_20_6_1"/>
<dbReference type="InParanoid" id="Q2QYW1"/>
<dbReference type="OMA" id="CKTMIAQ"/>
<dbReference type="OrthoDB" id="26525at2759"/>
<dbReference type="Proteomes" id="UP000000763">
    <property type="component" value="Chromosome 11"/>
</dbReference>
<dbReference type="Proteomes" id="UP000000763">
    <property type="component" value="Chromosome 12"/>
</dbReference>
<dbReference type="Proteomes" id="UP000007752">
    <property type="component" value="Chromosome 12"/>
</dbReference>
<dbReference type="Proteomes" id="UP000059680">
    <property type="component" value="Chromosome 11"/>
</dbReference>
<dbReference type="Proteomes" id="UP000059680">
    <property type="component" value="Chromosome 12"/>
</dbReference>
<dbReference type="GO" id="GO:0005509">
    <property type="term" value="F:calcium ion binding"/>
    <property type="evidence" value="ECO:0007669"/>
    <property type="project" value="InterPro"/>
</dbReference>
<dbReference type="FunFam" id="1.10.238.10:FF:000292">
    <property type="entry name" value="Calcium-binding protein CML38"/>
    <property type="match status" value="1"/>
</dbReference>
<dbReference type="FunFam" id="1.10.238.10:FF:000506">
    <property type="entry name" value="Calcium-binding protein CML38"/>
    <property type="match status" value="1"/>
</dbReference>
<dbReference type="Gene3D" id="1.10.238.10">
    <property type="entry name" value="EF-hand"/>
    <property type="match status" value="2"/>
</dbReference>
<dbReference type="InterPro" id="IPR011992">
    <property type="entry name" value="EF-hand-dom_pair"/>
</dbReference>
<dbReference type="InterPro" id="IPR018247">
    <property type="entry name" value="EF_Hand_1_Ca_BS"/>
</dbReference>
<dbReference type="InterPro" id="IPR002048">
    <property type="entry name" value="EF_hand_dom"/>
</dbReference>
<dbReference type="InterPro" id="IPR039647">
    <property type="entry name" value="EF_hand_pair_protein_CML-like"/>
</dbReference>
<dbReference type="PANTHER" id="PTHR10891">
    <property type="entry name" value="EF-HAND CALCIUM-BINDING DOMAIN CONTAINING PROTEIN"/>
    <property type="match status" value="1"/>
</dbReference>
<dbReference type="Pfam" id="PF13499">
    <property type="entry name" value="EF-hand_7"/>
    <property type="match status" value="1"/>
</dbReference>
<dbReference type="Pfam" id="PF13833">
    <property type="entry name" value="EF-hand_8"/>
    <property type="match status" value="1"/>
</dbReference>
<dbReference type="SMART" id="SM00054">
    <property type="entry name" value="EFh"/>
    <property type="match status" value="3"/>
</dbReference>
<dbReference type="SUPFAM" id="SSF47473">
    <property type="entry name" value="EF-hand"/>
    <property type="match status" value="1"/>
</dbReference>
<dbReference type="PROSITE" id="PS00018">
    <property type="entry name" value="EF_HAND_1"/>
    <property type="match status" value="3"/>
</dbReference>
<dbReference type="PROSITE" id="PS50222">
    <property type="entry name" value="EF_HAND_2"/>
    <property type="match status" value="4"/>
</dbReference>
<keyword id="KW-0106">Calcium</keyword>
<keyword id="KW-0479">Metal-binding</keyword>
<keyword id="KW-1185">Reference proteome</keyword>
<keyword id="KW-0677">Repeat</keyword>
<feature type="chain" id="PRO_0000338440" description="Probable calcium-binding protein CML25/26">
    <location>
        <begin position="1"/>
        <end position="149"/>
    </location>
</feature>
<feature type="domain" description="EF-hand 1" evidence="2">
    <location>
        <begin position="1"/>
        <end position="35"/>
    </location>
</feature>
<feature type="domain" description="EF-hand 2" evidence="2">
    <location>
        <begin position="37"/>
        <end position="72"/>
    </location>
</feature>
<feature type="domain" description="EF-hand 3" evidence="2">
    <location>
        <begin position="77"/>
        <end position="113"/>
    </location>
</feature>
<feature type="domain" description="EF-hand 4" evidence="2">
    <location>
        <begin position="117"/>
        <end position="149"/>
    </location>
</feature>
<feature type="binding site" evidence="2">
    <location>
        <position position="13"/>
    </location>
    <ligand>
        <name>Ca(2+)</name>
        <dbReference type="ChEBI" id="CHEBI:29108"/>
        <label>1</label>
    </ligand>
</feature>
<feature type="binding site" evidence="2">
    <location>
        <position position="15"/>
    </location>
    <ligand>
        <name>Ca(2+)</name>
        <dbReference type="ChEBI" id="CHEBI:29108"/>
        <label>1</label>
    </ligand>
</feature>
<feature type="binding site" evidence="2">
    <location>
        <position position="17"/>
    </location>
    <ligand>
        <name>Ca(2+)</name>
        <dbReference type="ChEBI" id="CHEBI:29108"/>
        <label>1</label>
    </ligand>
</feature>
<feature type="binding site" evidence="2">
    <location>
        <position position="19"/>
    </location>
    <ligand>
        <name>Ca(2+)</name>
        <dbReference type="ChEBI" id="CHEBI:29108"/>
        <label>1</label>
    </ligand>
</feature>
<feature type="binding site" evidence="2">
    <location>
        <position position="24"/>
    </location>
    <ligand>
        <name>Ca(2+)</name>
        <dbReference type="ChEBI" id="CHEBI:29108"/>
        <label>1</label>
    </ligand>
</feature>
<feature type="binding site" evidence="2">
    <location>
        <position position="50"/>
    </location>
    <ligand>
        <name>Ca(2+)</name>
        <dbReference type="ChEBI" id="CHEBI:29108"/>
        <label>2</label>
    </ligand>
</feature>
<feature type="binding site" evidence="2">
    <location>
        <position position="52"/>
    </location>
    <ligand>
        <name>Ca(2+)</name>
        <dbReference type="ChEBI" id="CHEBI:29108"/>
        <label>2</label>
    </ligand>
</feature>
<feature type="binding site" evidence="2">
    <location>
        <position position="54"/>
    </location>
    <ligand>
        <name>Ca(2+)</name>
        <dbReference type="ChEBI" id="CHEBI:29108"/>
        <label>2</label>
    </ligand>
</feature>
<feature type="binding site" evidence="2">
    <location>
        <position position="61"/>
    </location>
    <ligand>
        <name>Ca(2+)</name>
        <dbReference type="ChEBI" id="CHEBI:29108"/>
        <label>2</label>
    </ligand>
</feature>
<feature type="binding site" evidence="2">
    <location>
        <position position="130"/>
    </location>
    <ligand>
        <name>Ca(2+)</name>
        <dbReference type="ChEBI" id="CHEBI:29108"/>
        <label>3</label>
    </ligand>
</feature>
<feature type="binding site" evidence="2">
    <location>
        <position position="132"/>
    </location>
    <ligand>
        <name>Ca(2+)</name>
        <dbReference type="ChEBI" id="CHEBI:29108"/>
        <label>3</label>
    </ligand>
</feature>
<feature type="binding site" evidence="2">
    <location>
        <position position="134"/>
    </location>
    <ligand>
        <name>Ca(2+)</name>
        <dbReference type="ChEBI" id="CHEBI:29108"/>
        <label>3</label>
    </ligand>
</feature>
<feature type="binding site" evidence="2">
    <location>
        <position position="141"/>
    </location>
    <ligand>
        <name>Ca(2+)</name>
        <dbReference type="ChEBI" id="CHEBI:29108"/>
        <label>3</label>
    </ligand>
</feature>
<evidence type="ECO:0000250" key="1"/>
<evidence type="ECO:0000255" key="2">
    <source>
        <dbReference type="PROSITE-ProRule" id="PRU00448"/>
    </source>
</evidence>
<evidence type="ECO:0000305" key="3"/>
<evidence type="ECO:0000312" key="4">
    <source>
        <dbReference type="EMBL" id="BAT12303.1"/>
    </source>
</evidence>
<evidence type="ECO:0000312" key="5">
    <source>
        <dbReference type="EMBL" id="BAT15482.1"/>
    </source>
</evidence>